<protein>
    <recommendedName>
        <fullName evidence="1">Indole-3-glycerol phosphate synthase</fullName>
        <shortName evidence="1">IGPS</shortName>
        <ecNumber evidence="1">4.1.1.48</ecNumber>
    </recommendedName>
</protein>
<sequence>MSTDILRKIEAYKREEIAAAKARLALDELKARTRDQSAPRGFLKALEAKRAAGQFALIAEIKKASPSKGLIRPDFDPPALAKAYEEGGAACLSVLTDTPSFQGAPEFLTAARQACSLPALRKDFLFDPYQVYEARSWGADCILIIMASVDDDLAKELEDTAFALGMDALIEVHDEAEMERALKLSSRLLGVNNRNLRSFEVNLAVSERLAKMAPSDRLLVGESGIFTHEDCLRLEKSGIGTFLIGESLMRQHDVAAATRALLTGAEKL</sequence>
<proteinExistence type="inferred from homology"/>
<reference key="1">
    <citation type="journal article" date="2005" name="J. Bacteriol.">
        <title>Completion of the genome sequence of Brucella abortus and comparison to the highly similar genomes of Brucella melitensis and Brucella suis.</title>
        <authorList>
            <person name="Halling S.M."/>
            <person name="Peterson-Burch B.D."/>
            <person name="Bricker B.J."/>
            <person name="Zuerner R.L."/>
            <person name="Qing Z."/>
            <person name="Li L.-L."/>
            <person name="Kapur V."/>
            <person name="Alt D.P."/>
            <person name="Olsen S.C."/>
        </authorList>
    </citation>
    <scope>NUCLEOTIDE SEQUENCE [LARGE SCALE GENOMIC DNA]</scope>
    <source>
        <strain>9-941</strain>
    </source>
</reference>
<keyword id="KW-0028">Amino-acid biosynthesis</keyword>
<keyword id="KW-0057">Aromatic amino acid biosynthesis</keyword>
<keyword id="KW-0210">Decarboxylase</keyword>
<keyword id="KW-0456">Lyase</keyword>
<keyword id="KW-0822">Tryptophan biosynthesis</keyword>
<accession>Q57CZ8</accession>
<dbReference type="EC" id="4.1.1.48" evidence="1"/>
<dbReference type="EMBL" id="AE017223">
    <property type="protein sequence ID" value="AAX74486.1"/>
    <property type="molecule type" value="Genomic_DNA"/>
</dbReference>
<dbReference type="RefSeq" id="WP_002964269.1">
    <property type="nucleotide sequence ID" value="NC_006932.1"/>
</dbReference>
<dbReference type="SMR" id="Q57CZ8"/>
<dbReference type="EnsemblBacteria" id="AAX74486">
    <property type="protein sequence ID" value="AAX74486"/>
    <property type="gene ID" value="BruAb1_1147"/>
</dbReference>
<dbReference type="GeneID" id="93016523"/>
<dbReference type="KEGG" id="bmb:BruAb1_1147"/>
<dbReference type="HOGENOM" id="CLU_034247_2_0_5"/>
<dbReference type="UniPathway" id="UPA00035">
    <property type="reaction ID" value="UER00043"/>
</dbReference>
<dbReference type="Proteomes" id="UP000000540">
    <property type="component" value="Chromosome I"/>
</dbReference>
<dbReference type="GO" id="GO:0004425">
    <property type="term" value="F:indole-3-glycerol-phosphate synthase activity"/>
    <property type="evidence" value="ECO:0007669"/>
    <property type="project" value="UniProtKB-UniRule"/>
</dbReference>
<dbReference type="GO" id="GO:0004640">
    <property type="term" value="F:phosphoribosylanthranilate isomerase activity"/>
    <property type="evidence" value="ECO:0007669"/>
    <property type="project" value="TreeGrafter"/>
</dbReference>
<dbReference type="GO" id="GO:0000162">
    <property type="term" value="P:L-tryptophan biosynthetic process"/>
    <property type="evidence" value="ECO:0007669"/>
    <property type="project" value="UniProtKB-UniRule"/>
</dbReference>
<dbReference type="CDD" id="cd00331">
    <property type="entry name" value="IGPS"/>
    <property type="match status" value="1"/>
</dbReference>
<dbReference type="FunFam" id="3.20.20.70:FF:000024">
    <property type="entry name" value="Indole-3-glycerol phosphate synthase"/>
    <property type="match status" value="1"/>
</dbReference>
<dbReference type="Gene3D" id="3.20.20.70">
    <property type="entry name" value="Aldolase class I"/>
    <property type="match status" value="1"/>
</dbReference>
<dbReference type="HAMAP" id="MF_00134_B">
    <property type="entry name" value="IGPS_B"/>
    <property type="match status" value="1"/>
</dbReference>
<dbReference type="InterPro" id="IPR013785">
    <property type="entry name" value="Aldolase_TIM"/>
</dbReference>
<dbReference type="InterPro" id="IPR045186">
    <property type="entry name" value="Indole-3-glycerol_P_synth"/>
</dbReference>
<dbReference type="InterPro" id="IPR013798">
    <property type="entry name" value="Indole-3-glycerol_P_synth_dom"/>
</dbReference>
<dbReference type="InterPro" id="IPR001468">
    <property type="entry name" value="Indole-3-GlycerolPSynthase_CS"/>
</dbReference>
<dbReference type="InterPro" id="IPR011060">
    <property type="entry name" value="RibuloseP-bd_barrel"/>
</dbReference>
<dbReference type="NCBIfam" id="NF001370">
    <property type="entry name" value="PRK00278.1-2"/>
    <property type="match status" value="1"/>
</dbReference>
<dbReference type="NCBIfam" id="NF001373">
    <property type="entry name" value="PRK00278.1-6"/>
    <property type="match status" value="1"/>
</dbReference>
<dbReference type="NCBIfam" id="NF001377">
    <property type="entry name" value="PRK00278.2-4"/>
    <property type="match status" value="1"/>
</dbReference>
<dbReference type="PANTHER" id="PTHR22854:SF2">
    <property type="entry name" value="INDOLE-3-GLYCEROL-PHOSPHATE SYNTHASE"/>
    <property type="match status" value="1"/>
</dbReference>
<dbReference type="PANTHER" id="PTHR22854">
    <property type="entry name" value="TRYPTOPHAN BIOSYNTHESIS PROTEIN"/>
    <property type="match status" value="1"/>
</dbReference>
<dbReference type="Pfam" id="PF00218">
    <property type="entry name" value="IGPS"/>
    <property type="match status" value="1"/>
</dbReference>
<dbReference type="SUPFAM" id="SSF51366">
    <property type="entry name" value="Ribulose-phoshate binding barrel"/>
    <property type="match status" value="1"/>
</dbReference>
<dbReference type="PROSITE" id="PS00614">
    <property type="entry name" value="IGPS"/>
    <property type="match status" value="1"/>
</dbReference>
<gene>
    <name evidence="1" type="primary">trpC</name>
    <name type="ordered locus">BruAb1_1147</name>
</gene>
<feature type="chain" id="PRO_1000018449" description="Indole-3-glycerol phosphate synthase">
    <location>
        <begin position="1"/>
        <end position="268"/>
    </location>
</feature>
<evidence type="ECO:0000255" key="1">
    <source>
        <dbReference type="HAMAP-Rule" id="MF_00134"/>
    </source>
</evidence>
<name>TRPC_BRUAB</name>
<comment type="catalytic activity">
    <reaction evidence="1">
        <text>1-(2-carboxyphenylamino)-1-deoxy-D-ribulose 5-phosphate + H(+) = (1S,2R)-1-C-(indol-3-yl)glycerol 3-phosphate + CO2 + H2O</text>
        <dbReference type="Rhea" id="RHEA:23476"/>
        <dbReference type="ChEBI" id="CHEBI:15377"/>
        <dbReference type="ChEBI" id="CHEBI:15378"/>
        <dbReference type="ChEBI" id="CHEBI:16526"/>
        <dbReference type="ChEBI" id="CHEBI:58613"/>
        <dbReference type="ChEBI" id="CHEBI:58866"/>
        <dbReference type="EC" id="4.1.1.48"/>
    </reaction>
</comment>
<comment type="pathway">
    <text evidence="1">Amino-acid biosynthesis; L-tryptophan biosynthesis; L-tryptophan from chorismate: step 4/5.</text>
</comment>
<comment type="similarity">
    <text evidence="1">Belongs to the TrpC family.</text>
</comment>
<organism>
    <name type="scientific">Brucella abortus biovar 1 (strain 9-941)</name>
    <dbReference type="NCBI Taxonomy" id="262698"/>
    <lineage>
        <taxon>Bacteria</taxon>
        <taxon>Pseudomonadati</taxon>
        <taxon>Pseudomonadota</taxon>
        <taxon>Alphaproteobacteria</taxon>
        <taxon>Hyphomicrobiales</taxon>
        <taxon>Brucellaceae</taxon>
        <taxon>Brucella/Ochrobactrum group</taxon>
        <taxon>Brucella</taxon>
    </lineage>
</organism>